<accession>A9R4J2</accession>
<dbReference type="EC" id="2.7.2.3" evidence="1"/>
<dbReference type="EMBL" id="CP000901">
    <property type="protein sequence ID" value="ABX87674.1"/>
    <property type="molecule type" value="Genomic_DNA"/>
</dbReference>
<dbReference type="RefSeq" id="WP_002209963.1">
    <property type="nucleotide sequence ID" value="NZ_CP009935.1"/>
</dbReference>
<dbReference type="SMR" id="A9R4J2"/>
<dbReference type="GeneID" id="57973719"/>
<dbReference type="KEGG" id="ypg:YpAngola_A3816"/>
<dbReference type="PATRIC" id="fig|349746.12.peg.532"/>
<dbReference type="UniPathway" id="UPA00109">
    <property type="reaction ID" value="UER00185"/>
</dbReference>
<dbReference type="GO" id="GO:0005829">
    <property type="term" value="C:cytosol"/>
    <property type="evidence" value="ECO:0007669"/>
    <property type="project" value="TreeGrafter"/>
</dbReference>
<dbReference type="GO" id="GO:0043531">
    <property type="term" value="F:ADP binding"/>
    <property type="evidence" value="ECO:0007669"/>
    <property type="project" value="TreeGrafter"/>
</dbReference>
<dbReference type="GO" id="GO:0005524">
    <property type="term" value="F:ATP binding"/>
    <property type="evidence" value="ECO:0007669"/>
    <property type="project" value="UniProtKB-KW"/>
</dbReference>
<dbReference type="GO" id="GO:0004618">
    <property type="term" value="F:phosphoglycerate kinase activity"/>
    <property type="evidence" value="ECO:0007669"/>
    <property type="project" value="UniProtKB-UniRule"/>
</dbReference>
<dbReference type="GO" id="GO:0006094">
    <property type="term" value="P:gluconeogenesis"/>
    <property type="evidence" value="ECO:0007669"/>
    <property type="project" value="TreeGrafter"/>
</dbReference>
<dbReference type="GO" id="GO:0006096">
    <property type="term" value="P:glycolytic process"/>
    <property type="evidence" value="ECO:0007669"/>
    <property type="project" value="UniProtKB-UniRule"/>
</dbReference>
<dbReference type="FunFam" id="3.40.50.1260:FF:000001">
    <property type="entry name" value="Phosphoglycerate kinase"/>
    <property type="match status" value="1"/>
</dbReference>
<dbReference type="FunFam" id="3.40.50.1260:FF:000002">
    <property type="entry name" value="Phosphoglycerate kinase"/>
    <property type="match status" value="1"/>
</dbReference>
<dbReference type="Gene3D" id="3.40.50.1260">
    <property type="entry name" value="Phosphoglycerate kinase, N-terminal domain"/>
    <property type="match status" value="2"/>
</dbReference>
<dbReference type="HAMAP" id="MF_00145">
    <property type="entry name" value="Phosphoglyc_kinase"/>
    <property type="match status" value="1"/>
</dbReference>
<dbReference type="InterPro" id="IPR001576">
    <property type="entry name" value="Phosphoglycerate_kinase"/>
</dbReference>
<dbReference type="InterPro" id="IPR015911">
    <property type="entry name" value="Phosphoglycerate_kinase_CS"/>
</dbReference>
<dbReference type="InterPro" id="IPR015824">
    <property type="entry name" value="Phosphoglycerate_kinase_N"/>
</dbReference>
<dbReference type="InterPro" id="IPR036043">
    <property type="entry name" value="Phosphoglycerate_kinase_sf"/>
</dbReference>
<dbReference type="PANTHER" id="PTHR11406">
    <property type="entry name" value="PHOSPHOGLYCERATE KINASE"/>
    <property type="match status" value="1"/>
</dbReference>
<dbReference type="PANTHER" id="PTHR11406:SF23">
    <property type="entry name" value="PHOSPHOGLYCERATE KINASE 1, CHLOROPLASTIC-RELATED"/>
    <property type="match status" value="1"/>
</dbReference>
<dbReference type="Pfam" id="PF00162">
    <property type="entry name" value="PGK"/>
    <property type="match status" value="1"/>
</dbReference>
<dbReference type="PIRSF" id="PIRSF000724">
    <property type="entry name" value="Pgk"/>
    <property type="match status" value="1"/>
</dbReference>
<dbReference type="PRINTS" id="PR00477">
    <property type="entry name" value="PHGLYCKINASE"/>
</dbReference>
<dbReference type="SUPFAM" id="SSF53748">
    <property type="entry name" value="Phosphoglycerate kinase"/>
    <property type="match status" value="1"/>
</dbReference>
<dbReference type="PROSITE" id="PS00111">
    <property type="entry name" value="PGLYCERATE_KINASE"/>
    <property type="match status" value="1"/>
</dbReference>
<proteinExistence type="inferred from homology"/>
<sequence length="387" mass="41074">MSVIKMTDLDLAGKRVLIRADLNVPVKEGKVTSDARIRASLPTIEAALKQGAKVMVTSHLGRPTEGEYNEEFSLLPVVNYLKEKLSSPVRLAKDYLDGVEIAAGELVVLENVRFNKGEKKDDEALSKKYAALCDVYVMDAFGTAHRAQASTHGVGKFAPIACAGPLLSAELEALGKALGNPARPMVAIVGGSKVSTKLTVLGALSKIADKLIVGGGIANTFVAAQGHNVGKSLYEADLIPEAKRLLETCDIPVPTDVRVATEFSETAAATLKPANEIKDDEQILDLGDESAERLAEILKNAKTILWNGPVGVFEFPNFRKGTEIVARAIAESEAFSIAGGGDTLAAIDLFGIADQISYISTGGGAFLEFVEGKKLPAVVMLEERAKQ</sequence>
<keyword id="KW-0067">ATP-binding</keyword>
<keyword id="KW-0963">Cytoplasm</keyword>
<keyword id="KW-0324">Glycolysis</keyword>
<keyword id="KW-0418">Kinase</keyword>
<keyword id="KW-0547">Nucleotide-binding</keyword>
<keyword id="KW-0808">Transferase</keyword>
<gene>
    <name evidence="1" type="primary">pgk</name>
    <name type="ordered locus">YpAngola_A3816</name>
</gene>
<protein>
    <recommendedName>
        <fullName evidence="1">Phosphoglycerate kinase</fullName>
        <ecNumber evidence="1">2.7.2.3</ecNumber>
    </recommendedName>
</protein>
<reference key="1">
    <citation type="journal article" date="2010" name="J. Bacteriol.">
        <title>Genome sequence of the deep-rooted Yersinia pestis strain Angola reveals new insights into the evolution and pangenome of the plague bacterium.</title>
        <authorList>
            <person name="Eppinger M."/>
            <person name="Worsham P.L."/>
            <person name="Nikolich M.P."/>
            <person name="Riley D.R."/>
            <person name="Sebastian Y."/>
            <person name="Mou S."/>
            <person name="Achtman M."/>
            <person name="Lindler L.E."/>
            <person name="Ravel J."/>
        </authorList>
    </citation>
    <scope>NUCLEOTIDE SEQUENCE [LARGE SCALE GENOMIC DNA]</scope>
    <source>
        <strain>Angola</strain>
    </source>
</reference>
<feature type="chain" id="PRO_1000096396" description="Phosphoglycerate kinase">
    <location>
        <begin position="1"/>
        <end position="387"/>
    </location>
</feature>
<feature type="binding site" evidence="1">
    <location>
        <begin position="21"/>
        <end position="23"/>
    </location>
    <ligand>
        <name>substrate</name>
    </ligand>
</feature>
<feature type="binding site" evidence="1">
    <location>
        <position position="36"/>
    </location>
    <ligand>
        <name>substrate</name>
    </ligand>
</feature>
<feature type="binding site" evidence="1">
    <location>
        <begin position="59"/>
        <end position="62"/>
    </location>
    <ligand>
        <name>substrate</name>
    </ligand>
</feature>
<feature type="binding site" evidence="1">
    <location>
        <position position="113"/>
    </location>
    <ligand>
        <name>substrate</name>
    </ligand>
</feature>
<feature type="binding site" evidence="1">
    <location>
        <position position="146"/>
    </location>
    <ligand>
        <name>substrate</name>
    </ligand>
</feature>
<feature type="binding site" evidence="1">
    <location>
        <position position="197"/>
    </location>
    <ligand>
        <name>ATP</name>
        <dbReference type="ChEBI" id="CHEBI:30616"/>
    </ligand>
</feature>
<feature type="binding site" evidence="1">
    <location>
        <position position="314"/>
    </location>
    <ligand>
        <name>ATP</name>
        <dbReference type="ChEBI" id="CHEBI:30616"/>
    </ligand>
</feature>
<feature type="binding site" evidence="1">
    <location>
        <begin position="340"/>
        <end position="343"/>
    </location>
    <ligand>
        <name>ATP</name>
        <dbReference type="ChEBI" id="CHEBI:30616"/>
    </ligand>
</feature>
<comment type="catalytic activity">
    <reaction evidence="1">
        <text>(2R)-3-phosphoglycerate + ATP = (2R)-3-phospho-glyceroyl phosphate + ADP</text>
        <dbReference type="Rhea" id="RHEA:14801"/>
        <dbReference type="ChEBI" id="CHEBI:30616"/>
        <dbReference type="ChEBI" id="CHEBI:57604"/>
        <dbReference type="ChEBI" id="CHEBI:58272"/>
        <dbReference type="ChEBI" id="CHEBI:456216"/>
        <dbReference type="EC" id="2.7.2.3"/>
    </reaction>
</comment>
<comment type="pathway">
    <text evidence="1">Carbohydrate degradation; glycolysis; pyruvate from D-glyceraldehyde 3-phosphate: step 2/5.</text>
</comment>
<comment type="subunit">
    <text evidence="1">Monomer.</text>
</comment>
<comment type="subcellular location">
    <subcellularLocation>
        <location evidence="1">Cytoplasm</location>
    </subcellularLocation>
</comment>
<comment type="similarity">
    <text evidence="1">Belongs to the phosphoglycerate kinase family.</text>
</comment>
<name>PGK_YERPG</name>
<evidence type="ECO:0000255" key="1">
    <source>
        <dbReference type="HAMAP-Rule" id="MF_00145"/>
    </source>
</evidence>
<organism>
    <name type="scientific">Yersinia pestis bv. Antiqua (strain Angola)</name>
    <dbReference type="NCBI Taxonomy" id="349746"/>
    <lineage>
        <taxon>Bacteria</taxon>
        <taxon>Pseudomonadati</taxon>
        <taxon>Pseudomonadota</taxon>
        <taxon>Gammaproteobacteria</taxon>
        <taxon>Enterobacterales</taxon>
        <taxon>Yersiniaceae</taxon>
        <taxon>Yersinia</taxon>
    </lineage>
</organism>